<organism>
    <name type="scientific">Bordetella parapertussis (strain 12822 / ATCC BAA-587 / NCTC 13253)</name>
    <dbReference type="NCBI Taxonomy" id="257311"/>
    <lineage>
        <taxon>Bacteria</taxon>
        <taxon>Pseudomonadati</taxon>
        <taxon>Pseudomonadota</taxon>
        <taxon>Betaproteobacteria</taxon>
        <taxon>Burkholderiales</taxon>
        <taxon>Alcaligenaceae</taxon>
        <taxon>Bordetella</taxon>
    </lineage>
</organism>
<name>Y2422_BORPA</name>
<proteinExistence type="inferred from homology"/>
<comment type="subcellular location">
    <subcellularLocation>
        <location evidence="1">Cytoplasm</location>
    </subcellularLocation>
</comment>
<comment type="similarity">
    <text evidence="1">Belongs to the TACO1 family.</text>
</comment>
<protein>
    <recommendedName>
        <fullName evidence="1">Probable transcriptional regulatory protein BPP2422</fullName>
    </recommendedName>
</protein>
<dbReference type="EMBL" id="BX640430">
    <property type="protein sequence ID" value="CAE37718.1"/>
    <property type="molecule type" value="Genomic_DNA"/>
</dbReference>
<dbReference type="RefSeq" id="WP_003813187.1">
    <property type="nucleotide sequence ID" value="NC_002928.3"/>
</dbReference>
<dbReference type="SMR" id="Q7W7T8"/>
<dbReference type="KEGG" id="bpa:BPP2422"/>
<dbReference type="HOGENOM" id="CLU_062974_2_2_4"/>
<dbReference type="Proteomes" id="UP000001421">
    <property type="component" value="Chromosome"/>
</dbReference>
<dbReference type="GO" id="GO:0005829">
    <property type="term" value="C:cytosol"/>
    <property type="evidence" value="ECO:0007669"/>
    <property type="project" value="TreeGrafter"/>
</dbReference>
<dbReference type="GO" id="GO:0003677">
    <property type="term" value="F:DNA binding"/>
    <property type="evidence" value="ECO:0007669"/>
    <property type="project" value="UniProtKB-UniRule"/>
</dbReference>
<dbReference type="GO" id="GO:0006355">
    <property type="term" value="P:regulation of DNA-templated transcription"/>
    <property type="evidence" value="ECO:0007669"/>
    <property type="project" value="UniProtKB-UniRule"/>
</dbReference>
<dbReference type="FunFam" id="1.10.10.200:FF:000001">
    <property type="entry name" value="Probable transcriptional regulatory protein YebC"/>
    <property type="match status" value="1"/>
</dbReference>
<dbReference type="Gene3D" id="1.10.10.200">
    <property type="match status" value="1"/>
</dbReference>
<dbReference type="Gene3D" id="3.30.70.980">
    <property type="match status" value="2"/>
</dbReference>
<dbReference type="HAMAP" id="MF_00693">
    <property type="entry name" value="Transcrip_reg_TACO1"/>
    <property type="match status" value="1"/>
</dbReference>
<dbReference type="InterPro" id="IPR017856">
    <property type="entry name" value="Integrase-like_N"/>
</dbReference>
<dbReference type="InterPro" id="IPR048300">
    <property type="entry name" value="TACO1_YebC-like_2nd/3rd_dom"/>
</dbReference>
<dbReference type="InterPro" id="IPR049083">
    <property type="entry name" value="TACO1_YebC_N"/>
</dbReference>
<dbReference type="InterPro" id="IPR002876">
    <property type="entry name" value="Transcrip_reg_TACO1-like"/>
</dbReference>
<dbReference type="InterPro" id="IPR026564">
    <property type="entry name" value="Transcrip_reg_TACO1-like_dom3"/>
</dbReference>
<dbReference type="InterPro" id="IPR029072">
    <property type="entry name" value="YebC-like"/>
</dbReference>
<dbReference type="NCBIfam" id="NF001030">
    <property type="entry name" value="PRK00110.1"/>
    <property type="match status" value="1"/>
</dbReference>
<dbReference type="NCBIfam" id="NF009044">
    <property type="entry name" value="PRK12378.1"/>
    <property type="match status" value="1"/>
</dbReference>
<dbReference type="NCBIfam" id="TIGR01033">
    <property type="entry name" value="YebC/PmpR family DNA-binding transcriptional regulator"/>
    <property type="match status" value="1"/>
</dbReference>
<dbReference type="PANTHER" id="PTHR12532:SF6">
    <property type="entry name" value="TRANSCRIPTIONAL REGULATORY PROTEIN YEBC-RELATED"/>
    <property type="match status" value="1"/>
</dbReference>
<dbReference type="PANTHER" id="PTHR12532">
    <property type="entry name" value="TRANSLATIONAL ACTIVATOR OF CYTOCHROME C OXIDASE 1"/>
    <property type="match status" value="1"/>
</dbReference>
<dbReference type="Pfam" id="PF20772">
    <property type="entry name" value="TACO1_YebC_N"/>
    <property type="match status" value="1"/>
</dbReference>
<dbReference type="Pfam" id="PF01709">
    <property type="entry name" value="Transcrip_reg"/>
    <property type="match status" value="1"/>
</dbReference>
<dbReference type="SUPFAM" id="SSF75625">
    <property type="entry name" value="YebC-like"/>
    <property type="match status" value="1"/>
</dbReference>
<gene>
    <name type="ordered locus">BPP2422</name>
</gene>
<evidence type="ECO:0000255" key="1">
    <source>
        <dbReference type="HAMAP-Rule" id="MF_00693"/>
    </source>
</evidence>
<evidence type="ECO:0000256" key="2">
    <source>
        <dbReference type="SAM" id="MobiDB-lite"/>
    </source>
</evidence>
<accession>Q7W7T8</accession>
<feature type="chain" id="PRO_0000175772" description="Probable transcriptional regulatory protein BPP2422">
    <location>
        <begin position="1"/>
        <end position="243"/>
    </location>
</feature>
<feature type="region of interest" description="Disordered" evidence="2">
    <location>
        <begin position="1"/>
        <end position="21"/>
    </location>
</feature>
<sequence>MAGHSKWANIQHRKGRQDAKRGKLWTKIIREITVAARAGGADPDSNPRLRMAWDKATDANMPKDNIQRAIQRGAGGADGESYEEVRYEGYGIGGAAVIVDCMTDNRTRTVAEVRHAFAKHGGNLGQEGSVAFMFKHCGQFVFAPGTSEEAVMEAALEAGAEDIATDEEGVIEVVCAPADFTAVRQAFEAAGLKAEVDGVVMKALNETELTGEDAVKMQKLLDVLESLDDVQEVYTNVVFDEAQ</sequence>
<keyword id="KW-0963">Cytoplasm</keyword>
<keyword id="KW-0238">DNA-binding</keyword>
<keyword id="KW-0804">Transcription</keyword>
<keyword id="KW-0805">Transcription regulation</keyword>
<reference key="1">
    <citation type="journal article" date="2003" name="Nat. Genet.">
        <title>Comparative analysis of the genome sequences of Bordetella pertussis, Bordetella parapertussis and Bordetella bronchiseptica.</title>
        <authorList>
            <person name="Parkhill J."/>
            <person name="Sebaihia M."/>
            <person name="Preston A."/>
            <person name="Murphy L.D."/>
            <person name="Thomson N.R."/>
            <person name="Harris D.E."/>
            <person name="Holden M.T.G."/>
            <person name="Churcher C.M."/>
            <person name="Bentley S.D."/>
            <person name="Mungall K.L."/>
            <person name="Cerdeno-Tarraga A.-M."/>
            <person name="Temple L."/>
            <person name="James K.D."/>
            <person name="Harris B."/>
            <person name="Quail M.A."/>
            <person name="Achtman M."/>
            <person name="Atkin R."/>
            <person name="Baker S."/>
            <person name="Basham D."/>
            <person name="Bason N."/>
            <person name="Cherevach I."/>
            <person name="Chillingworth T."/>
            <person name="Collins M."/>
            <person name="Cronin A."/>
            <person name="Davis P."/>
            <person name="Doggett J."/>
            <person name="Feltwell T."/>
            <person name="Goble A."/>
            <person name="Hamlin N."/>
            <person name="Hauser H."/>
            <person name="Holroyd S."/>
            <person name="Jagels K."/>
            <person name="Leather S."/>
            <person name="Moule S."/>
            <person name="Norberczak H."/>
            <person name="O'Neil S."/>
            <person name="Ormond D."/>
            <person name="Price C."/>
            <person name="Rabbinowitsch E."/>
            <person name="Rutter S."/>
            <person name="Sanders M."/>
            <person name="Saunders D."/>
            <person name="Seeger K."/>
            <person name="Sharp S."/>
            <person name="Simmonds M."/>
            <person name="Skelton J."/>
            <person name="Squares R."/>
            <person name="Squares S."/>
            <person name="Stevens K."/>
            <person name="Unwin L."/>
            <person name="Whitehead S."/>
            <person name="Barrell B.G."/>
            <person name="Maskell D.J."/>
        </authorList>
    </citation>
    <scope>NUCLEOTIDE SEQUENCE [LARGE SCALE GENOMIC DNA]</scope>
    <source>
        <strain>12822 / ATCC BAA-587 / NCTC 13253</strain>
    </source>
</reference>